<organism>
    <name type="scientific">Escherichia coli (strain K12)</name>
    <dbReference type="NCBI Taxonomy" id="83333"/>
    <lineage>
        <taxon>Bacteria</taxon>
        <taxon>Pseudomonadati</taxon>
        <taxon>Pseudomonadota</taxon>
        <taxon>Gammaproteobacteria</taxon>
        <taxon>Enterobacterales</taxon>
        <taxon>Enterobacteriaceae</taxon>
        <taxon>Escherichia</taxon>
    </lineage>
</organism>
<sequence length="213" mass="23445">MFTGIVQGTAKLVSIDEKPNFRTHVVELPDHMLDGLETGASVAHNGCCLTVTEINGNHVSFDLMKETLRITNLGDLKVGDWVNVERAAKFSDEIGGHLMSGHIMTTAEVAKILTSENNRQIWFKVQDSQLMKYILYKGFIGIDGISLTVGEVTPTRFCVHLIPETLERTTLGKKKLGARVNIEIDPQTQAVVDTVERVLAARENAMNQPGTEA</sequence>
<evidence type="ECO:0000250" key="1">
    <source>
        <dbReference type="UniProtKB" id="Q2YN92"/>
    </source>
</evidence>
<evidence type="ECO:0000269" key="2">
    <source>
    </source>
</evidence>
<evidence type="ECO:0000269" key="3">
    <source>
    </source>
</evidence>
<evidence type="ECO:0000269" key="4">
    <source>
    </source>
</evidence>
<evidence type="ECO:0000305" key="5">
    <source>
    </source>
</evidence>
<evidence type="ECO:0007829" key="6">
    <source>
        <dbReference type="PDB" id="1I8D"/>
    </source>
</evidence>
<keyword id="KW-0002">3D-structure</keyword>
<keyword id="KW-1185">Reference proteome</keyword>
<keyword id="KW-0677">Repeat</keyword>
<keyword id="KW-0686">Riboflavin biosynthesis</keyword>
<keyword id="KW-0808">Transferase</keyword>
<proteinExistence type="evidence at protein level"/>
<name>RISA_ECOLI</name>
<dbReference type="EC" id="2.5.1.9"/>
<dbReference type="EMBL" id="X69109">
    <property type="protein sequence ID" value="CAA48861.1"/>
    <property type="molecule type" value="Genomic_DNA"/>
</dbReference>
<dbReference type="EMBL" id="U68703">
    <property type="protein sequence ID" value="AAB47940.1"/>
    <property type="molecule type" value="Genomic_DNA"/>
</dbReference>
<dbReference type="EMBL" id="U00096">
    <property type="protein sequence ID" value="AAC74734.1"/>
    <property type="molecule type" value="Genomic_DNA"/>
</dbReference>
<dbReference type="EMBL" id="AP009048">
    <property type="protein sequence ID" value="BAA15429.1"/>
    <property type="molecule type" value="Genomic_DNA"/>
</dbReference>
<dbReference type="PIR" id="S28526">
    <property type="entry name" value="S28526"/>
</dbReference>
<dbReference type="RefSeq" id="NP_416179.1">
    <property type="nucleotide sequence ID" value="NC_000913.3"/>
</dbReference>
<dbReference type="RefSeq" id="WP_000493947.1">
    <property type="nucleotide sequence ID" value="NZ_SSZK01000001.1"/>
</dbReference>
<dbReference type="PDB" id="1HZE">
    <property type="method" value="NMR"/>
    <property type="chains" value="A/B=1-97"/>
</dbReference>
<dbReference type="PDB" id="1I18">
    <property type="method" value="NMR"/>
    <property type="chains" value="A/B=1-97"/>
</dbReference>
<dbReference type="PDB" id="1I8D">
    <property type="method" value="X-ray"/>
    <property type="resolution" value="2.00 A"/>
    <property type="chains" value="A/B/C=1-213"/>
</dbReference>
<dbReference type="PDB" id="1PKV">
    <property type="method" value="X-ray"/>
    <property type="resolution" value="2.60 A"/>
    <property type="chains" value="A/B=1-97"/>
</dbReference>
<dbReference type="PDBsum" id="1HZE"/>
<dbReference type="PDBsum" id="1I18"/>
<dbReference type="PDBsum" id="1I8D"/>
<dbReference type="PDBsum" id="1PKV"/>
<dbReference type="BMRB" id="P0AFU8"/>
<dbReference type="SMR" id="P0AFU8"/>
<dbReference type="BioGRID" id="4261654">
    <property type="interactions" value="52"/>
</dbReference>
<dbReference type="DIP" id="DIP-47865N"/>
<dbReference type="FunCoup" id="P0AFU8">
    <property type="interactions" value="785"/>
</dbReference>
<dbReference type="IntAct" id="P0AFU8">
    <property type="interactions" value="3"/>
</dbReference>
<dbReference type="STRING" id="511145.b1662"/>
<dbReference type="DrugBank" id="DB00140">
    <property type="generic name" value="Riboflavin"/>
</dbReference>
<dbReference type="jPOST" id="P0AFU8"/>
<dbReference type="PaxDb" id="511145-b1662"/>
<dbReference type="EnsemblBacteria" id="AAC74734">
    <property type="protein sequence ID" value="AAC74734"/>
    <property type="gene ID" value="b1662"/>
</dbReference>
<dbReference type="GeneID" id="93775817"/>
<dbReference type="GeneID" id="945848"/>
<dbReference type="KEGG" id="ecj:JW1654"/>
<dbReference type="KEGG" id="eco:b1662"/>
<dbReference type="KEGG" id="ecoc:C3026_09535"/>
<dbReference type="PATRIC" id="fig|1411691.4.peg.595"/>
<dbReference type="EchoBASE" id="EB1378"/>
<dbReference type="eggNOG" id="COG0307">
    <property type="taxonomic scope" value="Bacteria"/>
</dbReference>
<dbReference type="HOGENOM" id="CLU_034388_0_1_6"/>
<dbReference type="InParanoid" id="P0AFU8"/>
<dbReference type="OMA" id="IGGHAMS"/>
<dbReference type="OrthoDB" id="9788537at2"/>
<dbReference type="PhylomeDB" id="P0AFU8"/>
<dbReference type="BioCyc" id="EcoCyc:RIBOFLAVIN-SYN-MONOMER"/>
<dbReference type="BioCyc" id="MetaCyc:RIBOFLAVIN-SYN-MONOMER"/>
<dbReference type="BRENDA" id="2.5.1.9">
    <property type="organism ID" value="2026"/>
</dbReference>
<dbReference type="SABIO-RK" id="P0AFU8"/>
<dbReference type="UniPathway" id="UPA00275">
    <property type="reaction ID" value="UER00405"/>
</dbReference>
<dbReference type="EvolutionaryTrace" id="P0AFU8"/>
<dbReference type="PRO" id="PR:P0AFU8"/>
<dbReference type="Proteomes" id="UP000000625">
    <property type="component" value="Chromosome"/>
</dbReference>
<dbReference type="GO" id="GO:0005829">
    <property type="term" value="C:cytosol"/>
    <property type="evidence" value="ECO:0000314"/>
    <property type="project" value="EcoCyc"/>
</dbReference>
<dbReference type="GO" id="GO:0004746">
    <property type="term" value="F:riboflavin synthase activity"/>
    <property type="evidence" value="ECO:0000314"/>
    <property type="project" value="EcoCyc"/>
</dbReference>
<dbReference type="GO" id="GO:0009231">
    <property type="term" value="P:riboflavin biosynthetic process"/>
    <property type="evidence" value="ECO:0000314"/>
    <property type="project" value="EcoCyc"/>
</dbReference>
<dbReference type="CDD" id="cd00402">
    <property type="entry name" value="Riboflavin_synthase_like"/>
    <property type="match status" value="1"/>
</dbReference>
<dbReference type="FunFam" id="2.40.30.20:FF:000003">
    <property type="entry name" value="Riboflavin synthase, alpha subunit"/>
    <property type="match status" value="1"/>
</dbReference>
<dbReference type="FunFam" id="2.40.30.20:FF:000005">
    <property type="entry name" value="Riboflavin synthase, alpha subunit"/>
    <property type="match status" value="1"/>
</dbReference>
<dbReference type="Gene3D" id="2.40.30.20">
    <property type="match status" value="2"/>
</dbReference>
<dbReference type="InterPro" id="IPR023366">
    <property type="entry name" value="ATP_synth_asu-like_sf"/>
</dbReference>
<dbReference type="InterPro" id="IPR001783">
    <property type="entry name" value="Lumazine-bd"/>
</dbReference>
<dbReference type="InterPro" id="IPR026017">
    <property type="entry name" value="Lumazine-bd_dom"/>
</dbReference>
<dbReference type="InterPro" id="IPR017938">
    <property type="entry name" value="Riboflavin_synthase-like_b-brl"/>
</dbReference>
<dbReference type="NCBIfam" id="NF006767">
    <property type="entry name" value="PRK09289.1"/>
    <property type="match status" value="1"/>
</dbReference>
<dbReference type="NCBIfam" id="NF009566">
    <property type="entry name" value="PRK13020.1"/>
    <property type="match status" value="1"/>
</dbReference>
<dbReference type="NCBIfam" id="TIGR00187">
    <property type="entry name" value="ribE"/>
    <property type="match status" value="1"/>
</dbReference>
<dbReference type="PANTHER" id="PTHR21098:SF0">
    <property type="entry name" value="RIBOFLAVIN SYNTHASE"/>
    <property type="match status" value="1"/>
</dbReference>
<dbReference type="PANTHER" id="PTHR21098">
    <property type="entry name" value="RIBOFLAVIN SYNTHASE ALPHA CHAIN"/>
    <property type="match status" value="1"/>
</dbReference>
<dbReference type="Pfam" id="PF00677">
    <property type="entry name" value="Lum_binding"/>
    <property type="match status" value="2"/>
</dbReference>
<dbReference type="PIRSF" id="PIRSF000498">
    <property type="entry name" value="Riboflavin_syn_A"/>
    <property type="match status" value="1"/>
</dbReference>
<dbReference type="SUPFAM" id="SSF63380">
    <property type="entry name" value="Riboflavin synthase domain-like"/>
    <property type="match status" value="2"/>
</dbReference>
<dbReference type="PROSITE" id="PS51177">
    <property type="entry name" value="LUMAZINE_BIND"/>
    <property type="match status" value="2"/>
</dbReference>
<accession>P0AFU8</accession>
<accession>P29015</accession>
<comment type="function">
    <text evidence="4">Catalyzes the dismutation of two molecules of 6,7-dimethyl-8-ribityllumazine, resulting in the formation of riboflavin and 5-amino-6-(D-ribitylamino)uracil.</text>
</comment>
<comment type="catalytic activity">
    <reaction evidence="4">
        <text>2 6,7-dimethyl-8-(1-D-ribityl)lumazine + H(+) = 5-amino-6-(D-ribitylamino)uracil + riboflavin</text>
        <dbReference type="Rhea" id="RHEA:20772"/>
        <dbReference type="ChEBI" id="CHEBI:15378"/>
        <dbReference type="ChEBI" id="CHEBI:15934"/>
        <dbReference type="ChEBI" id="CHEBI:57986"/>
        <dbReference type="ChEBI" id="CHEBI:58201"/>
        <dbReference type="EC" id="2.5.1.9"/>
    </reaction>
</comment>
<comment type="pathway">
    <text>Cofactor biosynthesis; riboflavin biosynthesis; riboflavin from 2-hydroxy-3-oxobutyl phosphate and 5-amino-6-(D-ribitylamino)uracil: step 2/2.</text>
</comment>
<comment type="subunit">
    <text evidence="2 3 4">Homotrimer. Unlike in B.subtilis, does not interact with 6,7-dimethyl-8-ribityllumazine synthase.</text>
</comment>
<gene>
    <name type="primary">ribC</name>
    <name type="synonym">ribE</name>
    <name type="ordered locus">b1662</name>
    <name type="ordered locus">JW1654</name>
</gene>
<reference key="1">
    <citation type="journal article" date="1996" name="Eur. J. Biochem.">
        <title>Cloning, sequencing, mapping and hyperexpression of the ribC gene coding for riboflavin synthase of Escherichia coli.</title>
        <authorList>
            <person name="Eberhardt S.M.R."/>
            <person name="Richter G."/>
            <person name="Gimbel W."/>
            <person name="Werner T."/>
            <person name="Bacher A."/>
        </authorList>
    </citation>
    <scope>NUCLEOTIDE SEQUENCE [GENOMIC DNA]</scope>
    <scope>FUNCTION</scope>
    <scope>CATALYTIC ACTIVITY</scope>
    <scope>SUBUNIT</scope>
    <source>
        <strain>K12 / RR28</strain>
    </source>
</reference>
<reference key="2">
    <citation type="journal article" date="1997" name="J. Bacteriol.">
        <title>Analysis of the boundaries of Salmonella pathogenicity island 2 and the corresponding chromosomal region of Escherichia coli K-12.</title>
        <authorList>
            <person name="Hensel M."/>
            <person name="Shea J.E."/>
            <person name="Baeumler A.J."/>
            <person name="Gleeson C."/>
            <person name="Blattner F.R."/>
            <person name="Holden D.W."/>
        </authorList>
    </citation>
    <scope>NUCLEOTIDE SEQUENCE [GENOMIC DNA]</scope>
    <source>
        <strain>K12 / MG1655 / ATCC 47076</strain>
    </source>
</reference>
<reference key="3">
    <citation type="journal article" date="1996" name="DNA Res.">
        <title>A 570-kb DNA sequence of the Escherichia coli K-12 genome corresponding to the 28.0-40.1 min region on the linkage map.</title>
        <authorList>
            <person name="Aiba H."/>
            <person name="Baba T."/>
            <person name="Fujita K."/>
            <person name="Hayashi K."/>
            <person name="Inada T."/>
            <person name="Isono K."/>
            <person name="Itoh T."/>
            <person name="Kasai H."/>
            <person name="Kashimoto K."/>
            <person name="Kimura S."/>
            <person name="Kitakawa M."/>
            <person name="Kitagawa M."/>
            <person name="Makino K."/>
            <person name="Miki T."/>
            <person name="Mizobuchi K."/>
            <person name="Mori H."/>
            <person name="Mori T."/>
            <person name="Motomura K."/>
            <person name="Nakade S."/>
            <person name="Nakamura Y."/>
            <person name="Nashimoto H."/>
            <person name="Nishio Y."/>
            <person name="Oshima T."/>
            <person name="Saito N."/>
            <person name="Sampei G."/>
            <person name="Seki Y."/>
            <person name="Sivasundaram S."/>
            <person name="Tagami H."/>
            <person name="Takeda J."/>
            <person name="Takemoto K."/>
            <person name="Takeuchi Y."/>
            <person name="Wada C."/>
            <person name="Yamamoto Y."/>
            <person name="Horiuchi T."/>
        </authorList>
    </citation>
    <scope>NUCLEOTIDE SEQUENCE [LARGE SCALE GENOMIC DNA]</scope>
    <source>
        <strain>K12 / W3110 / ATCC 27325 / DSM 5911</strain>
    </source>
</reference>
<reference key="4">
    <citation type="journal article" date="1997" name="Science">
        <title>The complete genome sequence of Escherichia coli K-12.</title>
        <authorList>
            <person name="Blattner F.R."/>
            <person name="Plunkett G. III"/>
            <person name="Bloch C.A."/>
            <person name="Perna N.T."/>
            <person name="Burland V."/>
            <person name="Riley M."/>
            <person name="Collado-Vides J."/>
            <person name="Glasner J.D."/>
            <person name="Rode C.K."/>
            <person name="Mayhew G.F."/>
            <person name="Gregor J."/>
            <person name="Davis N.W."/>
            <person name="Kirkpatrick H.A."/>
            <person name="Goeden M.A."/>
            <person name="Rose D.J."/>
            <person name="Mau B."/>
            <person name="Shao Y."/>
        </authorList>
    </citation>
    <scope>NUCLEOTIDE SEQUENCE [LARGE SCALE GENOMIC DNA]</scope>
    <source>
        <strain>K12 / MG1655 / ATCC 47076</strain>
    </source>
</reference>
<reference key="5">
    <citation type="journal article" date="2006" name="Mol. Syst. Biol.">
        <title>Highly accurate genome sequences of Escherichia coli K-12 strains MG1655 and W3110.</title>
        <authorList>
            <person name="Hayashi K."/>
            <person name="Morooka N."/>
            <person name="Yamamoto Y."/>
            <person name="Fujita K."/>
            <person name="Isono K."/>
            <person name="Choi S."/>
            <person name="Ohtsubo E."/>
            <person name="Baba T."/>
            <person name="Wanner B.L."/>
            <person name="Mori H."/>
            <person name="Horiuchi T."/>
        </authorList>
    </citation>
    <scope>NUCLEOTIDE SEQUENCE [LARGE SCALE GENOMIC DNA]</scope>
    <source>
        <strain>K12 / W3110 / ATCC 27325 / DSM 5911</strain>
    </source>
</reference>
<reference key="6">
    <citation type="journal article" date="2001" name="J. Mol. Biol.">
        <title>The solution structure of the N-terminal domain of riboflavin synthase.</title>
        <authorList>
            <person name="Truffault V."/>
            <person name="Coles M."/>
            <person name="Diercks T."/>
            <person name="Abelmann K."/>
            <person name="Eberhardt S."/>
            <person name="Luttgen H."/>
            <person name="Bacher A."/>
            <person name="Kessler H."/>
        </authorList>
    </citation>
    <scope>STRUCTURE BY NMR OF 1-97 IN COMPLEX WITH RIBOFLAVIN</scope>
</reference>
<reference key="7">
    <citation type="journal article" date="2001" name="Structure">
        <title>Crystal structure of riboflavin synthase.</title>
        <authorList>
            <person name="Liao D.I."/>
            <person name="Wawrzak Z."/>
            <person name="Calabrese J.C."/>
            <person name="Viitanen P.V."/>
            <person name="Jordan D.B."/>
        </authorList>
    </citation>
    <scope>X-RAY CRYSTALLOGRAPHY (2.0 ANGSTROMS)</scope>
</reference>
<reference key="8">
    <citation type="journal article" date="2003" name="J. Mol. Biol.">
        <title>The structure of the N-terminal domain of riboflavin synthase in complex with riboflavin at 2.6A resolution.</title>
        <authorList>
            <person name="Meining W."/>
            <person name="Eberhardt S."/>
            <person name="Bacher A."/>
            <person name="Ladenstein R."/>
        </authorList>
    </citation>
    <scope>X-RAY CRYSTALLOGRAPHY (2.60 ANGSTROMS) OF 1-97 IN COMPLEX WITH RIBOFLAVIN</scope>
</reference>
<protein>
    <recommendedName>
        <fullName>Riboflavin synthase</fullName>
        <shortName>RS</shortName>
        <ecNumber>2.5.1.9</ecNumber>
    </recommendedName>
</protein>
<feature type="chain" id="PRO_0000068166" description="Riboflavin synthase">
    <location>
        <begin position="1"/>
        <end position="213"/>
    </location>
</feature>
<feature type="repeat" description="Lumazine-binding 1">
    <location>
        <begin position="1"/>
        <end position="97"/>
    </location>
</feature>
<feature type="repeat" description="Lumazine-binding 2">
    <location>
        <begin position="98"/>
        <end position="195"/>
    </location>
</feature>
<feature type="binding site" evidence="1 5">
    <location>
        <begin position="4"/>
        <end position="6"/>
    </location>
    <ligand>
        <name>2,4-dihydroxypteridine</name>
        <dbReference type="ChEBI" id="CHEBI:16489"/>
        <label>1</label>
    </ligand>
</feature>
<feature type="binding site" evidence="1 5">
    <location>
        <begin position="48"/>
        <end position="50"/>
    </location>
    <ligand>
        <name>2,4-dihydroxypteridine</name>
        <dbReference type="ChEBI" id="CHEBI:16489"/>
        <label>2</label>
        <note>ligand shared between two trimeric partners</note>
    </ligand>
</feature>
<feature type="binding site" evidence="1 5">
    <location>
        <begin position="62"/>
        <end position="67"/>
    </location>
    <ligand>
        <name>2,4-dihydroxypteridine</name>
        <dbReference type="ChEBI" id="CHEBI:16489"/>
        <label>2</label>
        <note>ligand shared between two trimeric partners</note>
    </ligand>
</feature>
<feature type="binding site" evidence="1">
    <location>
        <begin position="101"/>
        <end position="103"/>
    </location>
    <ligand>
        <name>2,4-dihydroxypteridine</name>
        <dbReference type="ChEBI" id="CHEBI:16489"/>
        <label>2</label>
        <note>ligand shared between two trimeric partners</note>
    </ligand>
</feature>
<feature type="binding site" description="in other chain" evidence="1">
    <location>
        <position position="137"/>
    </location>
    <ligand>
        <name>2,4-dihydroxypteridine</name>
        <dbReference type="ChEBI" id="CHEBI:16489"/>
        <label>2</label>
        <note>ligand shared between two trimeric partners</note>
    </ligand>
</feature>
<feature type="binding site" evidence="1">
    <location>
        <begin position="146"/>
        <end position="148"/>
    </location>
    <ligand>
        <name>2,4-dihydroxypteridine</name>
        <dbReference type="ChEBI" id="CHEBI:16489"/>
        <label>1</label>
    </ligand>
</feature>
<feature type="binding site" evidence="1">
    <location>
        <begin position="160"/>
        <end position="165"/>
    </location>
    <ligand>
        <name>2,4-dihydroxypteridine</name>
        <dbReference type="ChEBI" id="CHEBI:16489"/>
        <label>1</label>
    </ligand>
</feature>
<feature type="strand" evidence="6">
    <location>
        <begin position="8"/>
        <end position="17"/>
    </location>
</feature>
<feature type="strand" evidence="6">
    <location>
        <begin position="19"/>
        <end position="27"/>
    </location>
</feature>
<feature type="helix" evidence="6">
    <location>
        <begin position="30"/>
        <end position="32"/>
    </location>
</feature>
<feature type="strand" evidence="6">
    <location>
        <begin position="41"/>
        <end position="44"/>
    </location>
</feature>
<feature type="strand" evidence="6">
    <location>
        <begin position="47"/>
        <end position="55"/>
    </location>
</feature>
<feature type="strand" evidence="6">
    <location>
        <begin position="58"/>
        <end position="64"/>
    </location>
</feature>
<feature type="helix" evidence="6">
    <location>
        <begin position="65"/>
        <end position="70"/>
    </location>
</feature>
<feature type="helix" evidence="6">
    <location>
        <begin position="72"/>
        <end position="75"/>
    </location>
</feature>
<feature type="strand" evidence="6">
    <location>
        <begin position="81"/>
        <end position="86"/>
    </location>
</feature>
<feature type="strand" evidence="6">
    <location>
        <begin position="105"/>
        <end position="115"/>
    </location>
</feature>
<feature type="strand" evidence="6">
    <location>
        <begin position="118"/>
        <end position="126"/>
    </location>
</feature>
<feature type="helix" evidence="6">
    <location>
        <begin position="128"/>
        <end position="133"/>
    </location>
</feature>
<feature type="strand" evidence="6">
    <location>
        <begin position="139"/>
        <end position="142"/>
    </location>
</feature>
<feature type="strand" evidence="6">
    <location>
        <begin position="145"/>
        <end position="148"/>
    </location>
</feature>
<feature type="strand" evidence="6">
    <location>
        <begin position="154"/>
        <end position="161"/>
    </location>
</feature>
<feature type="helix" evidence="6">
    <location>
        <begin position="163"/>
        <end position="168"/>
    </location>
</feature>
<feature type="helix" evidence="6">
    <location>
        <begin position="171"/>
        <end position="173"/>
    </location>
</feature>
<feature type="strand" evidence="6">
    <location>
        <begin position="179"/>
        <end position="184"/>
    </location>
</feature>
<feature type="helix" evidence="6">
    <location>
        <begin position="186"/>
        <end position="204"/>
    </location>
</feature>